<proteinExistence type="evidence at transcript level"/>
<evidence type="ECO:0000255" key="1"/>
<evidence type="ECO:0000303" key="2">
    <source>
    </source>
</evidence>
<evidence type="ECO:0000305" key="3"/>
<evidence type="ECO:0000305" key="4">
    <source>
    </source>
</evidence>
<name>TXH1A_ETHRU</name>
<accession>P0DQE4</accession>
<reference key="1">
    <citation type="journal article" date="2014" name="Mol. Biol. Evol.">
        <title>Clawing through evolution: toxin diversification and convergence in the ancient lineage Chilopoda (centipedes).</title>
        <authorList>
            <person name="Undheim E.A."/>
            <person name="Jones A."/>
            <person name="Clauser K.R."/>
            <person name="Holland J.W."/>
            <person name="Pineda S.S."/>
            <person name="King G.F."/>
            <person name="Fry B.G."/>
        </authorList>
    </citation>
    <scope>NUCLEOTIDE SEQUENCE [MRNA]</scope>
    <scope>NOMENCLATURE</scope>
    <source>
        <tissue>Venom gland</tissue>
    </source>
</reference>
<feature type="signal peptide" evidence="1">
    <location>
        <begin position="1"/>
        <end position="18"/>
    </location>
</feature>
<feature type="chain" id="PRO_0000446821" description="U-scoloptoxin(17)-Er1a" evidence="3">
    <location>
        <begin position="19"/>
        <end position="130"/>
    </location>
</feature>
<comment type="subcellular location">
    <subcellularLocation>
        <location evidence="4">Secreted</location>
    </subcellularLocation>
</comment>
<comment type="tissue specificity">
    <text evidence="4">Expressed by the venom gland.</text>
</comment>
<comment type="PTM">
    <text evidence="3">Contains 4 disulfide bonds.</text>
</comment>
<comment type="similarity">
    <text evidence="3">Belongs to the scoloptoxin-17 family.</text>
</comment>
<comment type="caution">
    <text evidence="4">All E.rubripes family members described in 'Undeheim et al., 2014' have not been imported into UniProtKB. Please, refer to this paper to access them.</text>
</comment>
<comment type="online information" name="National Center for Biotechnology Information (NCBI)">
    <link uri="https://www.ncbi.nlm.nih.gov/nuccore/GASI01000156"/>
</comment>
<keyword id="KW-1015">Disulfide bond</keyword>
<keyword id="KW-0964">Secreted</keyword>
<keyword id="KW-0732">Signal</keyword>
<keyword id="KW-0800">Toxin</keyword>
<organism>
    <name type="scientific">Ethmostigmus rubripes</name>
    <name type="common">Giant centipede</name>
    <dbReference type="NCBI Taxonomy" id="62613"/>
    <lineage>
        <taxon>Eukaryota</taxon>
        <taxon>Metazoa</taxon>
        <taxon>Ecdysozoa</taxon>
        <taxon>Arthropoda</taxon>
        <taxon>Myriapoda</taxon>
        <taxon>Chilopoda</taxon>
        <taxon>Pleurostigmophora</taxon>
        <taxon>Scolopendromorpha</taxon>
        <taxon>Scolopendridae</taxon>
        <taxon>Ethmostigmus</taxon>
    </lineage>
</organism>
<protein>
    <recommendedName>
        <fullName evidence="2">U-scoloptoxin(17)-Er1a</fullName>
        <shortName evidence="2">U-SLPTX(17)-Er1a</shortName>
    </recommendedName>
</protein>
<sequence>MKLLVFALFLQVVQLSLAQDDGKCIDMPKLLKKMQPAIDECGYKDAPTDQAKHDAVTCGLQKLGIVTQNKELVVQTYKDYLDDTILQHKTELYNALDECCPSGTCPAQDTFKCYHEKIDSVCPGDKQKPQ</sequence>
<dbReference type="SMR" id="P0DQE4"/>
<dbReference type="GO" id="GO:0005576">
    <property type="term" value="C:extracellular region"/>
    <property type="evidence" value="ECO:0007669"/>
    <property type="project" value="UniProtKB-SubCell"/>
</dbReference>
<dbReference type="GO" id="GO:0005549">
    <property type="term" value="F:odorant binding"/>
    <property type="evidence" value="ECO:0007669"/>
    <property type="project" value="InterPro"/>
</dbReference>
<dbReference type="GO" id="GO:0090729">
    <property type="term" value="F:toxin activity"/>
    <property type="evidence" value="ECO:0007669"/>
    <property type="project" value="UniProtKB-KW"/>
</dbReference>
<dbReference type="InterPro" id="IPR036728">
    <property type="entry name" value="PBP_GOBP_sf"/>
</dbReference>
<dbReference type="SUPFAM" id="SSF47565">
    <property type="entry name" value="Insect pheromone/odorant-binding proteins"/>
    <property type="match status" value="1"/>
</dbReference>